<accession>B9IVM7</accession>
<sequence length="340" mass="36575">MTKITVVGAGSWGTALAMVLADNGHDVRIWGNRSELMDEINTKHENSRYLPGITLPSTIVAYSSLEEALVDVNVVLLVVPTKAYREVLQDMKKYVAGPTTWIHASKGIEPGTSKRISEVIEEEIPEDLIKDVVVLSGPSHAEEVGLRQATTVTSAAKRMEAAEEVQDLFMNSYFRVYTNPDIVGVELGGALKNIIALAAGITDGLGLGDNAKAALMTRGLTEIARLGRKMGGNPLTFAGLTGMGDLIVTCTSVHSRNWRAGNLLGKGHSLEEVLESMGMVVEGVRTTKAAHELAEKMEVEMPITAALYDVLFNGNNVKDAVGSLMGRVRKHEVEAIPDLL</sequence>
<evidence type="ECO:0000255" key="1">
    <source>
        <dbReference type="HAMAP-Rule" id="MF_00394"/>
    </source>
</evidence>
<comment type="function">
    <text evidence="1">Catalyzes the reduction of the glycolytic intermediate dihydroxyacetone phosphate (DHAP) to sn-glycerol 3-phosphate (G3P), the key precursor for phospholipid synthesis.</text>
</comment>
<comment type="catalytic activity">
    <reaction evidence="1">
        <text>sn-glycerol 3-phosphate + NAD(+) = dihydroxyacetone phosphate + NADH + H(+)</text>
        <dbReference type="Rhea" id="RHEA:11092"/>
        <dbReference type="ChEBI" id="CHEBI:15378"/>
        <dbReference type="ChEBI" id="CHEBI:57540"/>
        <dbReference type="ChEBI" id="CHEBI:57597"/>
        <dbReference type="ChEBI" id="CHEBI:57642"/>
        <dbReference type="ChEBI" id="CHEBI:57945"/>
        <dbReference type="EC" id="1.1.1.94"/>
    </reaction>
    <physiologicalReaction direction="right-to-left" evidence="1">
        <dbReference type="Rhea" id="RHEA:11094"/>
    </physiologicalReaction>
</comment>
<comment type="catalytic activity">
    <reaction evidence="1">
        <text>sn-glycerol 3-phosphate + NADP(+) = dihydroxyacetone phosphate + NADPH + H(+)</text>
        <dbReference type="Rhea" id="RHEA:11096"/>
        <dbReference type="ChEBI" id="CHEBI:15378"/>
        <dbReference type="ChEBI" id="CHEBI:57597"/>
        <dbReference type="ChEBI" id="CHEBI:57642"/>
        <dbReference type="ChEBI" id="CHEBI:57783"/>
        <dbReference type="ChEBI" id="CHEBI:58349"/>
        <dbReference type="EC" id="1.1.1.94"/>
    </reaction>
    <physiologicalReaction direction="right-to-left" evidence="1">
        <dbReference type="Rhea" id="RHEA:11098"/>
    </physiologicalReaction>
</comment>
<comment type="pathway">
    <text evidence="1">Membrane lipid metabolism; glycerophospholipid metabolism.</text>
</comment>
<comment type="subcellular location">
    <subcellularLocation>
        <location evidence="1">Cytoplasm</location>
    </subcellularLocation>
</comment>
<comment type="similarity">
    <text evidence="1">Belongs to the NAD-dependent glycerol-3-phosphate dehydrogenase family.</text>
</comment>
<dbReference type="EC" id="1.1.1.94" evidence="1"/>
<dbReference type="EMBL" id="CP000227">
    <property type="protein sequence ID" value="ACM12002.1"/>
    <property type="molecule type" value="Genomic_DNA"/>
</dbReference>
<dbReference type="SMR" id="B9IVM7"/>
<dbReference type="KEGG" id="bcq:BCQ_1574"/>
<dbReference type="HOGENOM" id="CLU_033449_0_2_9"/>
<dbReference type="UniPathway" id="UPA00940"/>
<dbReference type="Proteomes" id="UP000000441">
    <property type="component" value="Chromosome"/>
</dbReference>
<dbReference type="GO" id="GO:0005829">
    <property type="term" value="C:cytosol"/>
    <property type="evidence" value="ECO:0007669"/>
    <property type="project" value="TreeGrafter"/>
</dbReference>
<dbReference type="GO" id="GO:0047952">
    <property type="term" value="F:glycerol-3-phosphate dehydrogenase [NAD(P)+] activity"/>
    <property type="evidence" value="ECO:0007669"/>
    <property type="project" value="UniProtKB-UniRule"/>
</dbReference>
<dbReference type="GO" id="GO:0051287">
    <property type="term" value="F:NAD binding"/>
    <property type="evidence" value="ECO:0007669"/>
    <property type="project" value="InterPro"/>
</dbReference>
<dbReference type="GO" id="GO:0005975">
    <property type="term" value="P:carbohydrate metabolic process"/>
    <property type="evidence" value="ECO:0007669"/>
    <property type="project" value="InterPro"/>
</dbReference>
<dbReference type="GO" id="GO:0046167">
    <property type="term" value="P:glycerol-3-phosphate biosynthetic process"/>
    <property type="evidence" value="ECO:0007669"/>
    <property type="project" value="UniProtKB-UniRule"/>
</dbReference>
<dbReference type="GO" id="GO:0046168">
    <property type="term" value="P:glycerol-3-phosphate catabolic process"/>
    <property type="evidence" value="ECO:0007669"/>
    <property type="project" value="InterPro"/>
</dbReference>
<dbReference type="GO" id="GO:0006650">
    <property type="term" value="P:glycerophospholipid metabolic process"/>
    <property type="evidence" value="ECO:0007669"/>
    <property type="project" value="UniProtKB-UniRule"/>
</dbReference>
<dbReference type="GO" id="GO:0008654">
    <property type="term" value="P:phospholipid biosynthetic process"/>
    <property type="evidence" value="ECO:0007669"/>
    <property type="project" value="UniProtKB-KW"/>
</dbReference>
<dbReference type="FunFam" id="1.10.1040.10:FF:000001">
    <property type="entry name" value="Glycerol-3-phosphate dehydrogenase [NAD(P)+]"/>
    <property type="match status" value="1"/>
</dbReference>
<dbReference type="FunFam" id="3.40.50.720:FF:000019">
    <property type="entry name" value="Glycerol-3-phosphate dehydrogenase [NAD(P)+]"/>
    <property type="match status" value="1"/>
</dbReference>
<dbReference type="Gene3D" id="1.10.1040.10">
    <property type="entry name" value="N-(1-d-carboxylethyl)-l-norvaline Dehydrogenase, domain 2"/>
    <property type="match status" value="1"/>
</dbReference>
<dbReference type="Gene3D" id="3.40.50.720">
    <property type="entry name" value="NAD(P)-binding Rossmann-like Domain"/>
    <property type="match status" value="1"/>
</dbReference>
<dbReference type="HAMAP" id="MF_00394">
    <property type="entry name" value="NAD_Glyc3P_dehydrog"/>
    <property type="match status" value="1"/>
</dbReference>
<dbReference type="InterPro" id="IPR008927">
    <property type="entry name" value="6-PGluconate_DH-like_C_sf"/>
</dbReference>
<dbReference type="InterPro" id="IPR013328">
    <property type="entry name" value="6PGD_dom2"/>
</dbReference>
<dbReference type="InterPro" id="IPR006168">
    <property type="entry name" value="G3P_DH_NAD-dep"/>
</dbReference>
<dbReference type="InterPro" id="IPR006109">
    <property type="entry name" value="G3P_DH_NAD-dep_C"/>
</dbReference>
<dbReference type="InterPro" id="IPR011128">
    <property type="entry name" value="G3P_DH_NAD-dep_N"/>
</dbReference>
<dbReference type="InterPro" id="IPR036291">
    <property type="entry name" value="NAD(P)-bd_dom_sf"/>
</dbReference>
<dbReference type="NCBIfam" id="NF000940">
    <property type="entry name" value="PRK00094.1-2"/>
    <property type="match status" value="1"/>
</dbReference>
<dbReference type="NCBIfam" id="NF000941">
    <property type="entry name" value="PRK00094.1-3"/>
    <property type="match status" value="1"/>
</dbReference>
<dbReference type="NCBIfam" id="NF000942">
    <property type="entry name" value="PRK00094.1-4"/>
    <property type="match status" value="1"/>
</dbReference>
<dbReference type="PANTHER" id="PTHR11728">
    <property type="entry name" value="GLYCEROL-3-PHOSPHATE DEHYDROGENASE"/>
    <property type="match status" value="1"/>
</dbReference>
<dbReference type="PANTHER" id="PTHR11728:SF1">
    <property type="entry name" value="GLYCEROL-3-PHOSPHATE DEHYDROGENASE [NAD(+)] 2, CHLOROPLASTIC"/>
    <property type="match status" value="1"/>
</dbReference>
<dbReference type="Pfam" id="PF07479">
    <property type="entry name" value="NAD_Gly3P_dh_C"/>
    <property type="match status" value="1"/>
</dbReference>
<dbReference type="Pfam" id="PF01210">
    <property type="entry name" value="NAD_Gly3P_dh_N"/>
    <property type="match status" value="1"/>
</dbReference>
<dbReference type="PIRSF" id="PIRSF000114">
    <property type="entry name" value="Glycerol-3-P_dh"/>
    <property type="match status" value="1"/>
</dbReference>
<dbReference type="PRINTS" id="PR00077">
    <property type="entry name" value="GPDHDRGNASE"/>
</dbReference>
<dbReference type="SUPFAM" id="SSF48179">
    <property type="entry name" value="6-phosphogluconate dehydrogenase C-terminal domain-like"/>
    <property type="match status" value="1"/>
</dbReference>
<dbReference type="SUPFAM" id="SSF51735">
    <property type="entry name" value="NAD(P)-binding Rossmann-fold domains"/>
    <property type="match status" value="1"/>
</dbReference>
<dbReference type="PROSITE" id="PS00957">
    <property type="entry name" value="NAD_G3PDH"/>
    <property type="match status" value="1"/>
</dbReference>
<name>GPDA_BACCQ</name>
<protein>
    <recommendedName>
        <fullName evidence="1">Glycerol-3-phosphate dehydrogenase [NAD(P)+]</fullName>
        <ecNumber evidence="1">1.1.1.94</ecNumber>
    </recommendedName>
    <alternativeName>
        <fullName evidence="1">NAD(P)(+)-dependent glycerol-3-phosphate dehydrogenase</fullName>
    </alternativeName>
    <alternativeName>
        <fullName evidence="1">NAD(P)H-dependent dihydroxyacetone-phosphate reductase</fullName>
    </alternativeName>
</protein>
<keyword id="KW-0963">Cytoplasm</keyword>
<keyword id="KW-0444">Lipid biosynthesis</keyword>
<keyword id="KW-0443">Lipid metabolism</keyword>
<keyword id="KW-0520">NAD</keyword>
<keyword id="KW-0521">NADP</keyword>
<keyword id="KW-0547">Nucleotide-binding</keyword>
<keyword id="KW-0560">Oxidoreductase</keyword>
<keyword id="KW-0594">Phospholipid biosynthesis</keyword>
<keyword id="KW-1208">Phospholipid metabolism</keyword>
<feature type="chain" id="PRO_1000190121" description="Glycerol-3-phosphate dehydrogenase [NAD(P)+]">
    <location>
        <begin position="1"/>
        <end position="340"/>
    </location>
</feature>
<feature type="active site" description="Proton acceptor" evidence="1">
    <location>
        <position position="192"/>
    </location>
</feature>
<feature type="binding site" evidence="1">
    <location>
        <position position="11"/>
    </location>
    <ligand>
        <name>NADPH</name>
        <dbReference type="ChEBI" id="CHEBI:57783"/>
    </ligand>
</feature>
<feature type="binding site" evidence="1">
    <location>
        <position position="12"/>
    </location>
    <ligand>
        <name>NADPH</name>
        <dbReference type="ChEBI" id="CHEBI:57783"/>
    </ligand>
</feature>
<feature type="binding site" evidence="1">
    <location>
        <position position="33"/>
    </location>
    <ligand>
        <name>NADPH</name>
        <dbReference type="ChEBI" id="CHEBI:57783"/>
    </ligand>
</feature>
<feature type="binding site" evidence="1">
    <location>
        <position position="106"/>
    </location>
    <ligand>
        <name>NADPH</name>
        <dbReference type="ChEBI" id="CHEBI:57783"/>
    </ligand>
</feature>
<feature type="binding site" evidence="1">
    <location>
        <position position="106"/>
    </location>
    <ligand>
        <name>sn-glycerol 3-phosphate</name>
        <dbReference type="ChEBI" id="CHEBI:57597"/>
    </ligand>
</feature>
<feature type="binding site" evidence="1">
    <location>
        <position position="137"/>
    </location>
    <ligand>
        <name>sn-glycerol 3-phosphate</name>
        <dbReference type="ChEBI" id="CHEBI:57597"/>
    </ligand>
</feature>
<feature type="binding site" evidence="1">
    <location>
        <position position="139"/>
    </location>
    <ligand>
        <name>sn-glycerol 3-phosphate</name>
        <dbReference type="ChEBI" id="CHEBI:57597"/>
    </ligand>
</feature>
<feature type="binding site" evidence="1">
    <location>
        <position position="141"/>
    </location>
    <ligand>
        <name>NADPH</name>
        <dbReference type="ChEBI" id="CHEBI:57783"/>
    </ligand>
</feature>
<feature type="binding site" evidence="1">
    <location>
        <position position="192"/>
    </location>
    <ligand>
        <name>sn-glycerol 3-phosphate</name>
        <dbReference type="ChEBI" id="CHEBI:57597"/>
    </ligand>
</feature>
<feature type="binding site" evidence="1">
    <location>
        <position position="245"/>
    </location>
    <ligand>
        <name>sn-glycerol 3-phosphate</name>
        <dbReference type="ChEBI" id="CHEBI:57597"/>
    </ligand>
</feature>
<feature type="binding site" evidence="1">
    <location>
        <position position="255"/>
    </location>
    <ligand>
        <name>sn-glycerol 3-phosphate</name>
        <dbReference type="ChEBI" id="CHEBI:57597"/>
    </ligand>
</feature>
<feature type="binding site" evidence="1">
    <location>
        <position position="256"/>
    </location>
    <ligand>
        <name>NADPH</name>
        <dbReference type="ChEBI" id="CHEBI:57783"/>
    </ligand>
</feature>
<feature type="binding site" evidence="1">
    <location>
        <position position="256"/>
    </location>
    <ligand>
        <name>sn-glycerol 3-phosphate</name>
        <dbReference type="ChEBI" id="CHEBI:57597"/>
    </ligand>
</feature>
<feature type="binding site" evidence="1">
    <location>
        <position position="257"/>
    </location>
    <ligand>
        <name>sn-glycerol 3-phosphate</name>
        <dbReference type="ChEBI" id="CHEBI:57597"/>
    </ligand>
</feature>
<feature type="binding site" evidence="1">
    <location>
        <position position="280"/>
    </location>
    <ligand>
        <name>NADPH</name>
        <dbReference type="ChEBI" id="CHEBI:57783"/>
    </ligand>
</feature>
<feature type="binding site" evidence="1">
    <location>
        <position position="282"/>
    </location>
    <ligand>
        <name>NADPH</name>
        <dbReference type="ChEBI" id="CHEBI:57783"/>
    </ligand>
</feature>
<organism>
    <name type="scientific">Bacillus cereus (strain Q1)</name>
    <dbReference type="NCBI Taxonomy" id="361100"/>
    <lineage>
        <taxon>Bacteria</taxon>
        <taxon>Bacillati</taxon>
        <taxon>Bacillota</taxon>
        <taxon>Bacilli</taxon>
        <taxon>Bacillales</taxon>
        <taxon>Bacillaceae</taxon>
        <taxon>Bacillus</taxon>
        <taxon>Bacillus cereus group</taxon>
    </lineage>
</organism>
<gene>
    <name evidence="1" type="primary">gpsA</name>
    <name type="ordered locus">BCQ_1574</name>
</gene>
<reference key="1">
    <citation type="journal article" date="2009" name="J. Bacteriol.">
        <title>Complete genome sequence of the extremophilic Bacillus cereus strain Q1 with industrial applications.</title>
        <authorList>
            <person name="Xiong Z."/>
            <person name="Jiang Y."/>
            <person name="Qi D."/>
            <person name="Lu H."/>
            <person name="Yang F."/>
            <person name="Yang J."/>
            <person name="Chen L."/>
            <person name="Sun L."/>
            <person name="Xu X."/>
            <person name="Xue Y."/>
            <person name="Zhu Y."/>
            <person name="Jin Q."/>
        </authorList>
    </citation>
    <scope>NUCLEOTIDE SEQUENCE [LARGE SCALE GENOMIC DNA]</scope>
    <source>
        <strain>Q1</strain>
    </source>
</reference>
<proteinExistence type="inferred from homology"/>